<keyword id="KW-0002">3D-structure</keyword>
<keyword id="KW-0025">Alternative splicing</keyword>
<keyword id="KW-0225">Disease variant</keyword>
<keyword id="KW-0496">Mitochondrion</keyword>
<keyword id="KW-1274">Primary mitochondrial disease</keyword>
<keyword id="KW-1267">Proteomics identification</keyword>
<keyword id="KW-1185">Reference proteome</keyword>
<proteinExistence type="evidence at protein level"/>
<reference key="1">
    <citation type="submission" date="2005-09" db="EMBL/GenBank/DDBJ databases">
        <authorList>
            <person name="Zhou Y."/>
            <person name="Cao J."/>
            <person name="Han Z."/>
        </authorList>
    </citation>
    <scope>NUCLEOTIDE SEQUENCE [MRNA] (ISOFORM 1)</scope>
    <source>
        <tissue>Liver</tissue>
    </source>
</reference>
<reference key="2">
    <citation type="journal article" date="1995" name="Nature">
        <title>Initial assessment of human gene diversity and expression patterns based upon 83 million nucleotides of cDNA sequence.</title>
        <authorList>
            <person name="Adams M.D."/>
            <person name="Kerlavage A.R."/>
            <person name="Fleischmann R.D."/>
            <person name="Fuldner R.A."/>
            <person name="Bult C.J."/>
            <person name="Lee N.H."/>
            <person name="Kirkness E.F."/>
            <person name="Weinstock K.G."/>
            <person name="Gocayne J.D."/>
            <person name="White O."/>
        </authorList>
    </citation>
    <scope>NUCLEOTIDE SEQUENCE [LARGE SCALE MRNA] (ISOFORM 2)</scope>
    <source>
        <tissue>Colon</tissue>
    </source>
</reference>
<reference key="3">
    <citation type="journal article" date="2005" name="Nature">
        <title>Generation and annotation of the DNA sequences of human chromosomes 2 and 4.</title>
        <authorList>
            <person name="Hillier L.W."/>
            <person name="Graves T.A."/>
            <person name="Fulton R.S."/>
            <person name="Fulton L.A."/>
            <person name="Pepin K.H."/>
            <person name="Minx P."/>
            <person name="Wagner-McPherson C."/>
            <person name="Layman D."/>
            <person name="Wylie K."/>
            <person name="Sekhon M."/>
            <person name="Becker M.C."/>
            <person name="Fewell G.A."/>
            <person name="Delehaunty K.D."/>
            <person name="Miner T.L."/>
            <person name="Nash W.E."/>
            <person name="Kremitzki C."/>
            <person name="Oddy L."/>
            <person name="Du H."/>
            <person name="Sun H."/>
            <person name="Bradshaw-Cordum H."/>
            <person name="Ali J."/>
            <person name="Carter J."/>
            <person name="Cordes M."/>
            <person name="Harris A."/>
            <person name="Isak A."/>
            <person name="van Brunt A."/>
            <person name="Nguyen C."/>
            <person name="Du F."/>
            <person name="Courtney L."/>
            <person name="Kalicki J."/>
            <person name="Ozersky P."/>
            <person name="Abbott S."/>
            <person name="Armstrong J."/>
            <person name="Belter E.A."/>
            <person name="Caruso L."/>
            <person name="Cedroni M."/>
            <person name="Cotton M."/>
            <person name="Davidson T."/>
            <person name="Desai A."/>
            <person name="Elliott G."/>
            <person name="Erb T."/>
            <person name="Fronick C."/>
            <person name="Gaige T."/>
            <person name="Haakenson W."/>
            <person name="Haglund K."/>
            <person name="Holmes A."/>
            <person name="Harkins R."/>
            <person name="Kim K."/>
            <person name="Kruchowski S.S."/>
            <person name="Strong C.M."/>
            <person name="Grewal N."/>
            <person name="Goyea E."/>
            <person name="Hou S."/>
            <person name="Levy A."/>
            <person name="Martinka S."/>
            <person name="Mead K."/>
            <person name="McLellan M.D."/>
            <person name="Meyer R."/>
            <person name="Randall-Maher J."/>
            <person name="Tomlinson C."/>
            <person name="Dauphin-Kohlberg S."/>
            <person name="Kozlowicz-Reilly A."/>
            <person name="Shah N."/>
            <person name="Swearengen-Shahid S."/>
            <person name="Snider J."/>
            <person name="Strong J.T."/>
            <person name="Thompson J."/>
            <person name="Yoakum M."/>
            <person name="Leonard S."/>
            <person name="Pearman C."/>
            <person name="Trani L."/>
            <person name="Radionenko M."/>
            <person name="Waligorski J.E."/>
            <person name="Wang C."/>
            <person name="Rock S.M."/>
            <person name="Tin-Wollam A.-M."/>
            <person name="Maupin R."/>
            <person name="Latreille P."/>
            <person name="Wendl M.C."/>
            <person name="Yang S.-P."/>
            <person name="Pohl C."/>
            <person name="Wallis J.W."/>
            <person name="Spieth J."/>
            <person name="Bieri T.A."/>
            <person name="Berkowicz N."/>
            <person name="Nelson J.O."/>
            <person name="Osborne J."/>
            <person name="Ding L."/>
            <person name="Meyer R."/>
            <person name="Sabo A."/>
            <person name="Shotland Y."/>
            <person name="Sinha P."/>
            <person name="Wohldmann P.E."/>
            <person name="Cook L.L."/>
            <person name="Hickenbotham M.T."/>
            <person name="Eldred J."/>
            <person name="Williams D."/>
            <person name="Jones T.A."/>
            <person name="She X."/>
            <person name="Ciccarelli F.D."/>
            <person name="Izaurralde E."/>
            <person name="Taylor J."/>
            <person name="Schmutz J."/>
            <person name="Myers R.M."/>
            <person name="Cox D.R."/>
            <person name="Huang X."/>
            <person name="McPherson J.D."/>
            <person name="Mardis E.R."/>
            <person name="Clifton S.W."/>
            <person name="Warren W.C."/>
            <person name="Chinwalla A.T."/>
            <person name="Eddy S.R."/>
            <person name="Marra M.A."/>
            <person name="Ovcharenko I."/>
            <person name="Furey T.S."/>
            <person name="Miller W."/>
            <person name="Eichler E.E."/>
            <person name="Bork P."/>
            <person name="Suyama M."/>
            <person name="Torrents D."/>
            <person name="Waterston R.H."/>
            <person name="Wilson R.K."/>
        </authorList>
    </citation>
    <scope>NUCLEOTIDE SEQUENCE [LARGE SCALE GENOMIC DNA]</scope>
</reference>
<reference key="4">
    <citation type="submission" date="2005-07" db="EMBL/GenBank/DDBJ databases">
        <authorList>
            <person name="Mural R.J."/>
            <person name="Istrail S."/>
            <person name="Sutton G."/>
            <person name="Florea L."/>
            <person name="Halpern A.L."/>
            <person name="Mobarry C.M."/>
            <person name="Lippert R."/>
            <person name="Walenz B."/>
            <person name="Shatkay H."/>
            <person name="Dew I."/>
            <person name="Miller J.R."/>
            <person name="Flanigan M.J."/>
            <person name="Edwards N.J."/>
            <person name="Bolanos R."/>
            <person name="Fasulo D."/>
            <person name="Halldorsson B.V."/>
            <person name="Hannenhalli S."/>
            <person name="Turner R."/>
            <person name="Yooseph S."/>
            <person name="Lu F."/>
            <person name="Nusskern D.R."/>
            <person name="Shue B.C."/>
            <person name="Zheng X.H."/>
            <person name="Zhong F."/>
            <person name="Delcher A.L."/>
            <person name="Huson D.H."/>
            <person name="Kravitz S.A."/>
            <person name="Mouchard L."/>
            <person name="Reinert K."/>
            <person name="Remington K.A."/>
            <person name="Clark A.G."/>
            <person name="Waterman M.S."/>
            <person name="Eichler E.E."/>
            <person name="Adams M.D."/>
            <person name="Hunkapiller M.W."/>
            <person name="Myers E.W."/>
            <person name="Venter J.C."/>
        </authorList>
    </citation>
    <scope>NUCLEOTIDE SEQUENCE [LARGE SCALE GENOMIC DNA]</scope>
</reference>
<reference key="5">
    <citation type="journal article" date="2008" name="Mol. Cell. Biochem.">
        <title>hBolA, novel non-classical secreted proteins, belonging to different BolA family with functional divergence.</title>
        <authorList>
            <person name="Zhou Y.B."/>
            <person name="Cao J.B."/>
            <person name="Wan B.B."/>
            <person name="Wang X.R."/>
            <person name="Ding G.H."/>
            <person name="Zhu H."/>
            <person name="Yang H.M."/>
            <person name="Wang K.S."/>
            <person name="Zhang X."/>
            <person name="Han Z.G."/>
        </authorList>
    </citation>
    <scope>TISSUE SPECIFICITY</scope>
</reference>
<reference key="6">
    <citation type="journal article" date="2011" name="Am. J. Hum. Genet.">
        <title>Mutations in iron-sulfur cluster scaffold genes NFU1 and BOLA3 cause a fatal deficiency of multiple respiratory chain and 2-oxoacid dehydrogenase enzymes.</title>
        <authorList>
            <person name="Cameron J.M."/>
            <person name="Janer A."/>
            <person name="Levandovskiy V."/>
            <person name="Mackay N."/>
            <person name="Rouault T.A."/>
            <person name="Tong W.H."/>
            <person name="Ogilvie I."/>
            <person name="Shoubridge E.A."/>
            <person name="Robinson B.H."/>
        </authorList>
    </citation>
    <scope>INVOLVEMENT IN MMDS2</scope>
</reference>
<reference key="7">
    <citation type="journal article" date="2011" name="BMC Syst. Biol.">
        <title>Initial characterization of the human central proteome.</title>
        <authorList>
            <person name="Burkard T.R."/>
            <person name="Planyavsky M."/>
            <person name="Kaupe I."/>
            <person name="Breitwieser F.P."/>
            <person name="Buerckstuemmer T."/>
            <person name="Bennett K.L."/>
            <person name="Superti-Furga G."/>
            <person name="Colinge J."/>
        </authorList>
    </citation>
    <scope>IDENTIFICATION BY MASS SPECTROMETRY [LARGE SCALE ANALYSIS]</scope>
</reference>
<reference key="8">
    <citation type="journal article" date="2012" name="Proc. Natl. Acad. Sci. U.S.A.">
        <title>N-terminal acetylome analyses and functional insights of the N-terminal acetyltransferase NatB.</title>
        <authorList>
            <person name="Van Damme P."/>
            <person name="Lasa M."/>
            <person name="Polevoda B."/>
            <person name="Gazquez C."/>
            <person name="Elosegui-Artola A."/>
            <person name="Kim D.S."/>
            <person name="De Juan-Pardo E."/>
            <person name="Demeyer K."/>
            <person name="Hole K."/>
            <person name="Larrea E."/>
            <person name="Timmerman E."/>
            <person name="Prieto J."/>
            <person name="Arnesen T."/>
            <person name="Sherman F."/>
            <person name="Gevaert K."/>
            <person name="Aldabe R."/>
        </authorList>
    </citation>
    <scope>IDENTIFICATION BY MASS SPECTROMETRY [LARGE SCALE ANALYSIS]</scope>
</reference>
<reference key="9">
    <citation type="journal article" date="2013" name="Antioxid. Redox Signal.">
        <title>BOLA1 is an aerobic protein that prevents mitochondrial morphology changes induced by glutathione depletion.</title>
        <authorList>
            <person name="Willems P."/>
            <person name="Wanschers B.F."/>
            <person name="Esseling J."/>
            <person name="Szklarczyk R."/>
            <person name="Kudla U."/>
            <person name="Duarte I."/>
            <person name="Forkink M."/>
            <person name="Nooteboom M."/>
            <person name="Swarts H."/>
            <person name="Gloerich J."/>
            <person name="Nijtmans L."/>
            <person name="Koopman W."/>
            <person name="Huynen M.A."/>
        </authorList>
    </citation>
    <scope>SUBCELLULAR LOCATION</scope>
</reference>
<reference key="10">
    <citation type="journal article" date="2016" name="Elife">
        <title>Mitochondrial Bol1 and Bol3 function as assembly factors for specific iron-sulfur proteins.</title>
        <authorList>
            <person name="Uzarska M.A."/>
            <person name="Nasta V."/>
            <person name="Weiler B.D."/>
            <person name="Spantgar F."/>
            <person name="Ciofi-Baffoni S."/>
            <person name="Saviello M.R."/>
            <person name="Gonnelli L."/>
            <person name="Muehlenhoff U."/>
            <person name="Banci L."/>
            <person name="Lill R."/>
        </authorList>
    </citation>
    <scope>STRUCTURE BY NMR OF 27-107</scope>
    <scope>INTERACTION WITH NFU1</scope>
</reference>
<reference key="11">
    <citation type="journal article" date="2013" name="J. Inherit. Metab. Dis.">
        <title>Homozygous missense mutation in BOLA3 causes multiple mitochondrial dysfunctions syndrome in two siblings.</title>
        <authorList>
            <person name="Haack T.B."/>
            <person name="Rolinski B."/>
            <person name="Haberberger B."/>
            <person name="Zimmermann F."/>
            <person name="Schum J."/>
            <person name="Strecker V."/>
            <person name="Graf E."/>
            <person name="Athing U."/>
            <person name="Hoppen T."/>
            <person name="Wittig I."/>
            <person name="Sperl W."/>
            <person name="Freisinger P."/>
            <person name="Mayr J.A."/>
            <person name="Strom T.M."/>
            <person name="Meitinger T."/>
            <person name="Prokisch H."/>
        </authorList>
    </citation>
    <scope>VARIANT MMDS2 ASN-67</scope>
</reference>
<reference key="12">
    <citation type="journal article" date="2014" name="Brain">
        <title>Variant non ketotic hyperglycinemia is caused by mutations in LIAS, BOLA3 and the novel gene GLRX5.</title>
        <authorList>
            <person name="Baker P.R. II"/>
            <person name="Friederich M.W."/>
            <person name="Swanson M.A."/>
            <person name="Shaikh T."/>
            <person name="Bhattacharya K."/>
            <person name="Scharer G.H."/>
            <person name="Aicher J."/>
            <person name="Creadon-Swindell G."/>
            <person name="Geiger E."/>
            <person name="MacLean K.N."/>
            <person name="Lee W.T."/>
            <person name="Deshpande C."/>
            <person name="Freckmann M.L."/>
            <person name="Shih L.Y."/>
            <person name="Wasserstein M."/>
            <person name="Rasmussen M.B."/>
            <person name="Lund A.M."/>
            <person name="Procopis P."/>
            <person name="Cameron J.M."/>
            <person name="Robinson B.H."/>
            <person name="Brown G.K."/>
            <person name="Brown R.M."/>
            <person name="Compton A.G."/>
            <person name="Dieckmann C.L."/>
            <person name="Collard R."/>
            <person name="Coughlin C.R. II"/>
            <person name="Spector E."/>
            <person name="Wempe M.F."/>
            <person name="Van Hove J.L."/>
        </authorList>
    </citation>
    <scope>VARIANT MMDS2 46-ARG--ARG-107 DEL</scope>
</reference>
<reference key="13">
    <citation type="journal article" date="2016" name="PLoS Genet.">
        <title>A comprehensive genomic analysis reveals the genetic landscape of mitochondrial respiratory chain complex deficiencies.</title>
        <authorList>
            <person name="Kohda M."/>
            <person name="Tokuzawa Y."/>
            <person name="Kishita Y."/>
            <person name="Nyuzuki H."/>
            <person name="Moriyama Y."/>
            <person name="Mizuno Y."/>
            <person name="Hirata T."/>
            <person name="Yatsuka Y."/>
            <person name="Yamashita-Sugahara Y."/>
            <person name="Nakachi Y."/>
            <person name="Kato H."/>
            <person name="Okuda A."/>
            <person name="Tamaru S."/>
            <person name="Borna N.N."/>
            <person name="Banshoya K."/>
            <person name="Aigaki T."/>
            <person name="Sato-Miyata Y."/>
            <person name="Ohnuma K."/>
            <person name="Suzuki T."/>
            <person name="Nagao A."/>
            <person name="Maehata H."/>
            <person name="Matsuda F."/>
            <person name="Higasa K."/>
            <person name="Nagasaki M."/>
            <person name="Yasuda J."/>
            <person name="Yamamoto M."/>
            <person name="Fushimi T."/>
            <person name="Shimura M."/>
            <person name="Kaiho-Ichimoto K."/>
            <person name="Harashima H."/>
            <person name="Yamazaki T."/>
            <person name="Mori M."/>
            <person name="Murayama K."/>
            <person name="Ohtake A."/>
            <person name="Okazaki Y."/>
        </authorList>
    </citation>
    <scope>VARIANT MMDS2 ARG-96</scope>
</reference>
<comment type="function">
    <text evidence="1 11">Acts as a mitochondrial iron-sulfur (Fe-S) cluster assembly factor that facilitates (Fe-S) cluster insertion into a subset of mitochondrial proteins. Probably acts together with NFU1 (PubMed:27532772).</text>
</comment>
<comment type="subunit">
    <text evidence="8">Interacts with NFU1 (PubMed:27532772).</text>
</comment>
<comment type="interaction">
    <interactant intactId="EBI-12086950">
        <id>Q53S33</id>
    </interactant>
    <interactant intactId="EBI-2557990">
        <id>Q0VG06</id>
        <label>FAAP100</label>
    </interactant>
    <organismsDiffer>false</organismsDiffer>
    <experiments>2</experiments>
</comment>
<comment type="interaction">
    <interactant intactId="EBI-12086950">
        <id>Q53S33</id>
    </interactant>
    <interactant intactId="EBI-374781">
        <id>O76003</id>
        <label>GLRX3</label>
    </interactant>
    <organismsDiffer>false</organismsDiffer>
    <experiments>5</experiments>
</comment>
<comment type="interaction">
    <interactant intactId="EBI-12086950">
        <id>Q53S33</id>
    </interactant>
    <interactant intactId="EBI-1049910">
        <id>Q86SX6</id>
        <label>GLRX5</label>
    </interactant>
    <organismsDiffer>false</organismsDiffer>
    <experiments>13</experiments>
</comment>
<comment type="interaction">
    <interactant intactId="EBI-12086950">
        <id>Q53S33</id>
    </interactant>
    <interactant intactId="EBI-27823755">
        <id>PRO_0000141650</id>
        <label>GLRX5</label>
        <dbReference type="UniProtKB" id="Q86SX6"/>
    </interactant>
    <organismsDiffer>false</organismsDiffer>
    <experiments>5</experiments>
</comment>
<comment type="interaction">
    <interactant intactId="EBI-12086950">
        <id>Q53S33</id>
    </interactant>
    <interactant intactId="EBI-6509505">
        <id>Q0VD86</id>
        <label>INCA1</label>
    </interactant>
    <organismsDiffer>false</organismsDiffer>
    <experiments>3</experiments>
</comment>
<comment type="interaction">
    <interactant intactId="EBI-12086950">
        <id>Q53S33</id>
    </interactant>
    <interactant intactId="EBI-1047093">
        <id>O76011</id>
        <label>KRT34</label>
    </interactant>
    <organismsDiffer>false</organismsDiffer>
    <experiments>3</experiments>
</comment>
<comment type="interaction">
    <interactant intactId="EBI-12086950">
        <id>Q53S33</id>
    </interactant>
    <interactant intactId="EBI-1045155">
        <id>P43360</id>
        <label>MAGEA6</label>
    </interactant>
    <organismsDiffer>false</organismsDiffer>
    <experiments>3</experiments>
</comment>
<comment type="interaction">
    <interactant intactId="EBI-12086950">
        <id>Q53S33</id>
    </interactant>
    <interactant intactId="EBI-725252">
        <id>Q9UMS0</id>
        <label>NFU1</label>
    </interactant>
    <organismsDiffer>false</organismsDiffer>
    <experiments>2</experiments>
</comment>
<comment type="interaction">
    <interactant intactId="EBI-12086950">
        <id>Q53S33</id>
    </interactant>
    <interactant intactId="EBI-79165">
        <id>Q9NRD5</id>
        <label>PICK1</label>
    </interactant>
    <organismsDiffer>false</organismsDiffer>
    <experiments>3</experiments>
</comment>
<comment type="interaction">
    <interactant intactId="EBI-12086950">
        <id>Q53S33</id>
    </interactant>
    <interactant intactId="EBI-721615">
        <id>Q9H0T7</id>
        <label>RAB17</label>
    </interactant>
    <organismsDiffer>false</organismsDiffer>
    <experiments>3</experiments>
</comment>
<comment type="subcellular location">
    <subcellularLocation>
        <location evidence="5">Mitochondrion</location>
    </subcellularLocation>
</comment>
<comment type="alternative products">
    <event type="alternative splicing"/>
    <isoform>
        <id>Q53S33-1</id>
        <name>1</name>
        <sequence type="displayed"/>
    </isoform>
    <isoform>
        <id>Q53S33-2</id>
        <name>2</name>
        <sequence type="described" ref="VSP_045787"/>
    </isoform>
</comment>
<comment type="tissue specificity">
    <text evidence="2">Widely expressed.</text>
</comment>
<comment type="disease" evidence="3 4 6 7">
    <disease id="DI-03294">
        <name>Multiple mitochondrial dysfunctions syndrome 2 with hyperglycinemia</name>
        <acronym>MMDS2</acronym>
        <description>A severe disorder of systemic energy metabolism, resulting in weakness, respiratory failure, lack of neurologic development, lactic acidosis, hyperglycinemia and early death. Some patients show failure to thrive, pulmonary hypertension, hypotonia and irritability. Biochemical features include severe combined deficiency of the 2-oxoacid dehydrogenases, defective lipoic acid synthesis and reduction in activity of mitochondrial respiratory chain complexes.</description>
        <dbReference type="MIM" id="614299"/>
    </disease>
    <text>The disease is caused by variants affecting the gene represented in this entry.</text>
</comment>
<comment type="similarity">
    <text evidence="10">Belongs to the BolA/IbaG family.</text>
</comment>
<comment type="caution">
    <text evidence="2 5">Was initially reported to be secreted via a non-classical export pathway (PubMed:18548201). It was however later shown that it localizes to mitochondria, in agreement with other members of the family (PubMed:22746225).</text>
</comment>
<dbReference type="EMBL" id="DQ225187">
    <property type="protein sequence ID" value="ABB04094.1"/>
    <property type="molecule type" value="mRNA"/>
</dbReference>
<dbReference type="EMBL" id="AA316348">
    <property type="status" value="NOT_ANNOTATED_CDS"/>
    <property type="molecule type" value="mRNA"/>
</dbReference>
<dbReference type="EMBL" id="AC073263">
    <property type="protein sequence ID" value="AAX93059.1"/>
    <property type="molecule type" value="Genomic_DNA"/>
</dbReference>
<dbReference type="EMBL" id="CH471053">
    <property type="protein sequence ID" value="EAW99700.1"/>
    <property type="molecule type" value="Genomic_DNA"/>
</dbReference>
<dbReference type="CCDS" id="CCDS33224.1">
    <molecule id="Q53S33-2"/>
</dbReference>
<dbReference type="CCDS" id="CCDS33225.1">
    <molecule id="Q53S33-1"/>
</dbReference>
<dbReference type="RefSeq" id="NP_001030582.1">
    <molecule id="Q53S33-2"/>
    <property type="nucleotide sequence ID" value="NM_001035505.2"/>
</dbReference>
<dbReference type="RefSeq" id="NP_997717.2">
    <molecule id="Q53S33-1"/>
    <property type="nucleotide sequence ID" value="NM_212552.3"/>
</dbReference>
<dbReference type="PDB" id="2NCL">
    <property type="method" value="NMR"/>
    <property type="chains" value="A=27-107"/>
</dbReference>
<dbReference type="PDBsum" id="2NCL"/>
<dbReference type="SMR" id="Q53S33"/>
<dbReference type="BioGRID" id="132922">
    <property type="interactions" value="39"/>
</dbReference>
<dbReference type="ComplexPortal" id="CPX-6863">
    <property type="entry name" value="Mitochondrial BOLA3-GLRX5 iron-sulfur cluster assembly complex"/>
</dbReference>
<dbReference type="FunCoup" id="Q53S33">
    <property type="interactions" value="973"/>
</dbReference>
<dbReference type="IntAct" id="Q53S33">
    <property type="interactions" value="39"/>
</dbReference>
<dbReference type="STRING" id="9606.ENSP00000331369"/>
<dbReference type="iPTMnet" id="Q53S33"/>
<dbReference type="MetOSite" id="Q53S33"/>
<dbReference type="PhosphoSitePlus" id="Q53S33"/>
<dbReference type="BioMuta" id="BOLA3"/>
<dbReference type="DMDM" id="74726650"/>
<dbReference type="jPOST" id="Q53S33"/>
<dbReference type="MassIVE" id="Q53S33"/>
<dbReference type="PaxDb" id="9606-ENSP00000331369"/>
<dbReference type="PeptideAtlas" id="Q53S33"/>
<dbReference type="ProteomicsDB" id="33698"/>
<dbReference type="ProteomicsDB" id="62531">
    <molecule id="Q53S33-1"/>
</dbReference>
<dbReference type="Pumba" id="Q53S33"/>
<dbReference type="TopDownProteomics" id="Q53S33-1">
    <molecule id="Q53S33-1"/>
</dbReference>
<dbReference type="Antibodypedia" id="65208">
    <property type="antibodies" value="63 antibodies from 19 providers"/>
</dbReference>
<dbReference type="DNASU" id="388962"/>
<dbReference type="Ensembl" id="ENST00000295326.4">
    <molecule id="Q53S33-2"/>
    <property type="protein sequence ID" value="ENSP00000295326.4"/>
    <property type="gene ID" value="ENSG00000163170.12"/>
</dbReference>
<dbReference type="Ensembl" id="ENST00000327428.10">
    <molecule id="Q53S33-1"/>
    <property type="protein sequence ID" value="ENSP00000331369.5"/>
    <property type="gene ID" value="ENSG00000163170.12"/>
</dbReference>
<dbReference type="GeneID" id="388962"/>
<dbReference type="KEGG" id="hsa:388962"/>
<dbReference type="MANE-Select" id="ENST00000327428.10">
    <property type="protein sequence ID" value="ENSP00000331369.5"/>
    <property type="RefSeq nucleotide sequence ID" value="NM_212552.3"/>
    <property type="RefSeq protein sequence ID" value="NP_997717.2"/>
</dbReference>
<dbReference type="UCSC" id="uc002skc.2">
    <molecule id="Q53S33-1"/>
    <property type="organism name" value="human"/>
</dbReference>
<dbReference type="AGR" id="HGNC:24415"/>
<dbReference type="CTD" id="388962"/>
<dbReference type="DisGeNET" id="388962"/>
<dbReference type="GeneCards" id="BOLA3"/>
<dbReference type="HGNC" id="HGNC:24415">
    <property type="gene designation" value="BOLA3"/>
</dbReference>
<dbReference type="HPA" id="ENSG00000163170">
    <property type="expression patterns" value="Tissue enhanced (tongue)"/>
</dbReference>
<dbReference type="MalaCards" id="BOLA3"/>
<dbReference type="MIM" id="613183">
    <property type="type" value="gene"/>
</dbReference>
<dbReference type="MIM" id="614299">
    <property type="type" value="phenotype"/>
</dbReference>
<dbReference type="neXtProt" id="NX_Q53S33"/>
<dbReference type="OpenTargets" id="ENSG00000163170"/>
<dbReference type="Orphanet" id="401874">
    <property type="disease" value="Multiple mitochondrial dysfunctions syndrome type 2"/>
</dbReference>
<dbReference type="PharmGKB" id="PA142672554"/>
<dbReference type="VEuPathDB" id="HostDB:ENSG00000163170"/>
<dbReference type="eggNOG" id="KOG3348">
    <property type="taxonomic scope" value="Eukaryota"/>
</dbReference>
<dbReference type="GeneTree" id="ENSGT00390000013048"/>
<dbReference type="HOGENOM" id="CLU_109462_0_2_1"/>
<dbReference type="InParanoid" id="Q53S33"/>
<dbReference type="OMA" id="EIQNMHG"/>
<dbReference type="OrthoDB" id="203381at2759"/>
<dbReference type="PAN-GO" id="Q53S33">
    <property type="GO annotations" value="2 GO annotations based on evolutionary models"/>
</dbReference>
<dbReference type="PhylomeDB" id="Q53S33"/>
<dbReference type="TreeFam" id="TF332952"/>
<dbReference type="PathwayCommons" id="Q53S33"/>
<dbReference type="SignaLink" id="Q53S33"/>
<dbReference type="BioGRID-ORCS" id="388962">
    <property type="hits" value="130 hits in 1122 CRISPR screens"/>
</dbReference>
<dbReference type="ChiTaRS" id="BOLA3">
    <property type="organism name" value="human"/>
</dbReference>
<dbReference type="GenomeRNAi" id="388962"/>
<dbReference type="Pharos" id="Q53S33">
    <property type="development level" value="Tbio"/>
</dbReference>
<dbReference type="PRO" id="PR:Q53S33"/>
<dbReference type="Proteomes" id="UP000005640">
    <property type="component" value="Chromosome 2"/>
</dbReference>
<dbReference type="RNAct" id="Q53S33">
    <property type="molecule type" value="protein"/>
</dbReference>
<dbReference type="Bgee" id="ENSG00000163170">
    <property type="expression patterns" value="Expressed in left ventricle myocardium and 187 other cell types or tissues"/>
</dbReference>
<dbReference type="GO" id="GO:0005829">
    <property type="term" value="C:cytosol"/>
    <property type="evidence" value="ECO:0000314"/>
    <property type="project" value="HPA"/>
</dbReference>
<dbReference type="GO" id="GO:1990229">
    <property type="term" value="C:iron-sulfur cluster assembly complex"/>
    <property type="evidence" value="ECO:0000353"/>
    <property type="project" value="ComplexPortal"/>
</dbReference>
<dbReference type="GO" id="GO:0005759">
    <property type="term" value="C:mitochondrial matrix"/>
    <property type="evidence" value="ECO:0000318"/>
    <property type="project" value="GO_Central"/>
</dbReference>
<dbReference type="GO" id="GO:0005739">
    <property type="term" value="C:mitochondrion"/>
    <property type="evidence" value="ECO:0000314"/>
    <property type="project" value="HPA"/>
</dbReference>
<dbReference type="GO" id="GO:0016604">
    <property type="term" value="C:nuclear body"/>
    <property type="evidence" value="ECO:0000314"/>
    <property type="project" value="HPA"/>
</dbReference>
<dbReference type="GO" id="GO:1990845">
    <property type="term" value="P:adaptive thermogenesis"/>
    <property type="evidence" value="ECO:0007669"/>
    <property type="project" value="Ensembl"/>
</dbReference>
<dbReference type="GO" id="GO:0045454">
    <property type="term" value="P:cell redox homeostasis"/>
    <property type="evidence" value="ECO:0000303"/>
    <property type="project" value="ComplexPortal"/>
</dbReference>
<dbReference type="GO" id="GO:0097009">
    <property type="term" value="P:energy homeostasis"/>
    <property type="evidence" value="ECO:0007669"/>
    <property type="project" value="Ensembl"/>
</dbReference>
<dbReference type="GO" id="GO:0006006">
    <property type="term" value="P:glucose metabolic process"/>
    <property type="evidence" value="ECO:0007669"/>
    <property type="project" value="Ensembl"/>
</dbReference>
<dbReference type="GO" id="GO:0006879">
    <property type="term" value="P:intracellular iron ion homeostasis"/>
    <property type="evidence" value="ECO:0000303"/>
    <property type="project" value="ComplexPortal"/>
</dbReference>
<dbReference type="GO" id="GO:0016226">
    <property type="term" value="P:iron-sulfur cluster assembly"/>
    <property type="evidence" value="ECO:0000303"/>
    <property type="project" value="ComplexPortal"/>
</dbReference>
<dbReference type="GO" id="GO:1903442">
    <property type="term" value="P:response to lipoic acid"/>
    <property type="evidence" value="ECO:0007669"/>
    <property type="project" value="Ensembl"/>
</dbReference>
<dbReference type="FunFam" id="3.30.300.90:FF:000003">
    <property type="entry name" value="BolA family member 3"/>
    <property type="match status" value="1"/>
</dbReference>
<dbReference type="Gene3D" id="3.30.300.90">
    <property type="entry name" value="BolA-like"/>
    <property type="match status" value="1"/>
</dbReference>
<dbReference type="InterPro" id="IPR002634">
    <property type="entry name" value="BolA"/>
</dbReference>
<dbReference type="InterPro" id="IPR036065">
    <property type="entry name" value="BolA-like_sf"/>
</dbReference>
<dbReference type="InterPro" id="IPR052275">
    <property type="entry name" value="Mt_Fe-S_assembly_factor"/>
</dbReference>
<dbReference type="PANTHER" id="PTHR46188">
    <property type="entry name" value="BOLA-LIKE PROTEIN 3"/>
    <property type="match status" value="1"/>
</dbReference>
<dbReference type="PANTHER" id="PTHR46188:SF1">
    <property type="entry name" value="BOLA-LIKE PROTEIN 3"/>
    <property type="match status" value="1"/>
</dbReference>
<dbReference type="Pfam" id="PF01722">
    <property type="entry name" value="BolA"/>
    <property type="match status" value="1"/>
</dbReference>
<dbReference type="SUPFAM" id="SSF82657">
    <property type="entry name" value="BolA-like"/>
    <property type="match status" value="1"/>
</dbReference>
<organism>
    <name type="scientific">Homo sapiens</name>
    <name type="common">Human</name>
    <dbReference type="NCBI Taxonomy" id="9606"/>
    <lineage>
        <taxon>Eukaryota</taxon>
        <taxon>Metazoa</taxon>
        <taxon>Chordata</taxon>
        <taxon>Craniata</taxon>
        <taxon>Vertebrata</taxon>
        <taxon>Euteleostomi</taxon>
        <taxon>Mammalia</taxon>
        <taxon>Eutheria</taxon>
        <taxon>Euarchontoglires</taxon>
        <taxon>Primates</taxon>
        <taxon>Haplorrhini</taxon>
        <taxon>Catarrhini</taxon>
        <taxon>Hominidae</taxon>
        <taxon>Homo</taxon>
    </lineage>
</organism>
<name>BOLA3_HUMAN</name>
<protein>
    <recommendedName>
        <fullName evidence="10">BolA-like protein 3</fullName>
    </recommendedName>
</protein>
<sequence length="107" mass="12114">MAAWSPAAAAPLLRGIRGLPLHHRMFATQTEGELRVTQILKEKFPRATAIKVTDISGGCGAMYEIKIESEEFKEKRTVQQHQMVNQALKEEIKEMHGLRIFTSVPKR</sequence>
<accession>Q53S33</accession>
<accession>G3XAB0</accession>
<gene>
    <name evidence="12" type="primary">BOLA3</name>
</gene>
<feature type="chain" id="PRO_0000245501" description="BolA-like protein 3">
    <location>
        <begin position="1"/>
        <end position="107"/>
    </location>
</feature>
<feature type="splice variant" id="VSP_045787" description="In isoform 2." evidence="9">
    <original>GCGAMYEIKIESEEFKEKRTVQQHQMVNQALKEEIKEMHGLRIFTSVPKR</original>
    <variation>TKRRNQRDAWIADIYLCPQTLTTPWLHRCCCLRPWMNFTDIILP</variation>
    <location>
        <begin position="58"/>
        <end position="107"/>
    </location>
</feature>
<feature type="sequence variant" id="VAR_077910" description="In MMDS2." evidence="6">
    <location>
        <begin position="46"/>
        <end position="107"/>
    </location>
</feature>
<feature type="sequence variant" id="VAR_077911" description="In MMDS2; dbSNP:rs550855238." evidence="4">
    <original>I</original>
    <variation>N</variation>
    <location>
        <position position="67"/>
    </location>
</feature>
<feature type="sequence variant" id="VAR_076180" description="In MMDS2; dbSNP:rs148674363." evidence="7">
    <original>H</original>
    <variation>R</variation>
    <location>
        <position position="96"/>
    </location>
</feature>
<feature type="helix" evidence="13">
    <location>
        <begin position="31"/>
        <end position="43"/>
    </location>
</feature>
<feature type="strand" evidence="13">
    <location>
        <begin position="47"/>
        <end position="54"/>
    </location>
</feature>
<feature type="turn" evidence="13">
    <location>
        <begin position="57"/>
        <end position="59"/>
    </location>
</feature>
<feature type="strand" evidence="13">
    <location>
        <begin position="63"/>
        <end position="69"/>
    </location>
</feature>
<feature type="helix" evidence="13">
    <location>
        <begin position="70"/>
        <end position="74"/>
    </location>
</feature>
<feature type="helix" evidence="13">
    <location>
        <begin position="77"/>
        <end position="89"/>
    </location>
</feature>
<feature type="strand" evidence="13">
    <location>
        <begin position="99"/>
        <end position="101"/>
    </location>
</feature>
<evidence type="ECO:0000250" key="1">
    <source>
        <dbReference type="UniProtKB" id="P39724"/>
    </source>
</evidence>
<evidence type="ECO:0000269" key="2">
    <source>
    </source>
</evidence>
<evidence type="ECO:0000269" key="3">
    <source>
    </source>
</evidence>
<evidence type="ECO:0000269" key="4">
    <source>
    </source>
</evidence>
<evidence type="ECO:0000269" key="5">
    <source>
    </source>
</evidence>
<evidence type="ECO:0000269" key="6">
    <source>
    </source>
</evidence>
<evidence type="ECO:0000269" key="7">
    <source>
    </source>
</evidence>
<evidence type="ECO:0000269" key="8">
    <source>
    </source>
</evidence>
<evidence type="ECO:0000303" key="9">
    <source>
    </source>
</evidence>
<evidence type="ECO:0000305" key="10"/>
<evidence type="ECO:0000305" key="11">
    <source>
    </source>
</evidence>
<evidence type="ECO:0000312" key="12">
    <source>
        <dbReference type="HGNC" id="HGNC:24415"/>
    </source>
</evidence>
<evidence type="ECO:0007829" key="13">
    <source>
        <dbReference type="PDB" id="2NCL"/>
    </source>
</evidence>